<proteinExistence type="evidence at protein level"/>
<feature type="chain" id="PRO_0000388377" description="Uncharacterized protein DDB_G0288155">
    <location>
        <begin position="1"/>
        <end position="246"/>
    </location>
</feature>
<gene>
    <name type="ORF">DDB_G0288155</name>
</gene>
<keyword id="KW-0903">Direct protein sequencing</keyword>
<keyword id="KW-1185">Reference proteome</keyword>
<name>Y2881_DICDI</name>
<organism>
    <name type="scientific">Dictyostelium discoideum</name>
    <name type="common">Social amoeba</name>
    <dbReference type="NCBI Taxonomy" id="44689"/>
    <lineage>
        <taxon>Eukaryota</taxon>
        <taxon>Amoebozoa</taxon>
        <taxon>Evosea</taxon>
        <taxon>Eumycetozoa</taxon>
        <taxon>Dictyostelia</taxon>
        <taxon>Dictyosteliales</taxon>
        <taxon>Dictyosteliaceae</taxon>
        <taxon>Dictyostelium</taxon>
    </lineage>
</organism>
<protein>
    <recommendedName>
        <fullName>Uncharacterized protein DDB_G0288155</fullName>
    </recommendedName>
</protein>
<accession>Q54JC2</accession>
<reference key="1">
    <citation type="journal article" date="2005" name="Nature">
        <title>The genome of the social amoeba Dictyostelium discoideum.</title>
        <authorList>
            <person name="Eichinger L."/>
            <person name="Pachebat J.A."/>
            <person name="Gloeckner G."/>
            <person name="Rajandream M.A."/>
            <person name="Sucgang R."/>
            <person name="Berriman M."/>
            <person name="Song J."/>
            <person name="Olsen R."/>
            <person name="Szafranski K."/>
            <person name="Xu Q."/>
            <person name="Tunggal B."/>
            <person name="Kummerfeld S."/>
            <person name="Madera M."/>
            <person name="Konfortov B.A."/>
            <person name="Rivero F."/>
            <person name="Bankier A.T."/>
            <person name="Lehmann R."/>
            <person name="Hamlin N."/>
            <person name="Davies R."/>
            <person name="Gaudet P."/>
            <person name="Fey P."/>
            <person name="Pilcher K."/>
            <person name="Chen G."/>
            <person name="Saunders D."/>
            <person name="Sodergren E.J."/>
            <person name="Davis P."/>
            <person name="Kerhornou A."/>
            <person name="Nie X."/>
            <person name="Hall N."/>
            <person name="Anjard C."/>
            <person name="Hemphill L."/>
            <person name="Bason N."/>
            <person name="Farbrother P."/>
            <person name="Desany B."/>
            <person name="Just E."/>
            <person name="Morio T."/>
            <person name="Rost R."/>
            <person name="Churcher C.M."/>
            <person name="Cooper J."/>
            <person name="Haydock S."/>
            <person name="van Driessche N."/>
            <person name="Cronin A."/>
            <person name="Goodhead I."/>
            <person name="Muzny D.M."/>
            <person name="Mourier T."/>
            <person name="Pain A."/>
            <person name="Lu M."/>
            <person name="Harper D."/>
            <person name="Lindsay R."/>
            <person name="Hauser H."/>
            <person name="James K.D."/>
            <person name="Quiles M."/>
            <person name="Madan Babu M."/>
            <person name="Saito T."/>
            <person name="Buchrieser C."/>
            <person name="Wardroper A."/>
            <person name="Felder M."/>
            <person name="Thangavelu M."/>
            <person name="Johnson D."/>
            <person name="Knights A."/>
            <person name="Loulseged H."/>
            <person name="Mungall K.L."/>
            <person name="Oliver K."/>
            <person name="Price C."/>
            <person name="Quail M.A."/>
            <person name="Urushihara H."/>
            <person name="Hernandez J."/>
            <person name="Rabbinowitsch E."/>
            <person name="Steffen D."/>
            <person name="Sanders M."/>
            <person name="Ma J."/>
            <person name="Kohara Y."/>
            <person name="Sharp S."/>
            <person name="Simmonds M.N."/>
            <person name="Spiegler S."/>
            <person name="Tivey A."/>
            <person name="Sugano S."/>
            <person name="White B."/>
            <person name="Walker D."/>
            <person name="Woodward J.R."/>
            <person name="Winckler T."/>
            <person name="Tanaka Y."/>
            <person name="Shaulsky G."/>
            <person name="Schleicher M."/>
            <person name="Weinstock G.M."/>
            <person name="Rosenthal A."/>
            <person name="Cox E.C."/>
            <person name="Chisholm R.L."/>
            <person name="Gibbs R.A."/>
            <person name="Loomis W.F."/>
            <person name="Platzer M."/>
            <person name="Kay R.R."/>
            <person name="Williams J.G."/>
            <person name="Dear P.H."/>
            <person name="Noegel A.A."/>
            <person name="Barrell B.G."/>
            <person name="Kuspa A."/>
        </authorList>
    </citation>
    <scope>NUCLEOTIDE SEQUENCE [LARGE SCALE GENOMIC DNA]</scope>
    <source>
        <strain>AX4</strain>
    </source>
</reference>
<reference key="2">
    <citation type="submission" date="2009-07" db="UniProtKB">
        <authorList>
            <person name="Bienvenut W.V."/>
            <person name="Ura S."/>
            <person name="Insall R.H."/>
        </authorList>
    </citation>
    <scope>PROTEIN SEQUENCE OF 44-57; 158-171; 219-230 AND 238-246</scope>
    <scope>IDENTIFICATION BY MASS SPECTROMETRY</scope>
    <source>
        <strain>AX2</strain>
    </source>
</reference>
<dbReference type="EMBL" id="AAFI02000109">
    <property type="protein sequence ID" value="EAL63365.1"/>
    <property type="molecule type" value="Genomic_DNA"/>
</dbReference>
<dbReference type="RefSeq" id="XP_636871.1">
    <property type="nucleotide sequence ID" value="XM_631779.1"/>
</dbReference>
<dbReference type="SMR" id="Q54JC2"/>
<dbReference type="FunCoup" id="Q54JC2">
    <property type="interactions" value="4"/>
</dbReference>
<dbReference type="STRING" id="44689.Q54JC2"/>
<dbReference type="PaxDb" id="44689-DDB0252830"/>
<dbReference type="EnsemblProtists" id="EAL63365">
    <property type="protein sequence ID" value="EAL63365"/>
    <property type="gene ID" value="DDB_G0288155"/>
</dbReference>
<dbReference type="GeneID" id="8626483"/>
<dbReference type="KEGG" id="ddi:DDB_G0288155"/>
<dbReference type="dictyBase" id="DDB_G0288155"/>
<dbReference type="VEuPathDB" id="AmoebaDB:DDB_G0288155"/>
<dbReference type="eggNOG" id="ENOG502QTES">
    <property type="taxonomic scope" value="Eukaryota"/>
</dbReference>
<dbReference type="HOGENOM" id="CLU_064827_0_0_1"/>
<dbReference type="InParanoid" id="Q54JC2"/>
<dbReference type="OMA" id="ACTLEDE"/>
<dbReference type="PhylomeDB" id="Q54JC2"/>
<dbReference type="PRO" id="PR:Q54JC2"/>
<dbReference type="Proteomes" id="UP000002195">
    <property type="component" value="Chromosome 5"/>
</dbReference>
<dbReference type="CDD" id="cd04645">
    <property type="entry name" value="LbH_gamma_CA_like"/>
    <property type="match status" value="1"/>
</dbReference>
<dbReference type="Gene3D" id="2.160.10.10">
    <property type="entry name" value="Hexapeptide repeat proteins"/>
    <property type="match status" value="1"/>
</dbReference>
<dbReference type="InterPro" id="IPR001451">
    <property type="entry name" value="Hexapep"/>
</dbReference>
<dbReference type="InterPro" id="IPR047324">
    <property type="entry name" value="LbH_gamma_CA-like"/>
</dbReference>
<dbReference type="InterPro" id="IPR050484">
    <property type="entry name" value="Transf_Hexapept/Carb_Anhydrase"/>
</dbReference>
<dbReference type="InterPro" id="IPR011004">
    <property type="entry name" value="Trimer_LpxA-like_sf"/>
</dbReference>
<dbReference type="PANTHER" id="PTHR13061">
    <property type="entry name" value="DYNACTIN SUBUNIT P25"/>
    <property type="match status" value="1"/>
</dbReference>
<dbReference type="PANTHER" id="PTHR13061:SF29">
    <property type="entry name" value="GAMMA CARBONIC ANHYDRASE-LIKE 1, MITOCHONDRIAL-RELATED"/>
    <property type="match status" value="1"/>
</dbReference>
<dbReference type="Pfam" id="PF00132">
    <property type="entry name" value="Hexapep"/>
    <property type="match status" value="1"/>
</dbReference>
<dbReference type="SUPFAM" id="SSF51161">
    <property type="entry name" value="Trimeric LpxA-like enzymes"/>
    <property type="match status" value="1"/>
</dbReference>
<sequence length="246" mass="26589">MSQKGLFGILGEVVKNTGLILHRTGCKMQGDYAYVEKLNRHTRLTAFGDNAPIVGQKSFIAPNASIIGDVVIGKESSIWYNAVLRGDVNSIHIGDKTVVSDRTVVHCSSNGPLGPKPTQIGDKVYIGPGSIVHAATILGESFIGTGSTLCDGSVVEKNGFLEAGSLLTAGKTIKSGEYWGGSPAKFIRQVTKDDESQLEKIIEQNINLSEQHEKQTSKSAKELNNDLLQKYVKNRTRSDHILNNPL</sequence>